<comment type="function">
    <text evidence="1">Catalyzes the oxidation of 3-carboxy-2-hydroxy-4-methylpentanoate (3-isopropylmalate) to 3-carboxy-4-methyl-2-oxopentanoate. The product decarboxylates to 4-methyl-2 oxopentanoate.</text>
</comment>
<comment type="catalytic activity">
    <reaction evidence="1">
        <text>(2R,3S)-3-isopropylmalate + NAD(+) = 4-methyl-2-oxopentanoate + CO2 + NADH</text>
        <dbReference type="Rhea" id="RHEA:32271"/>
        <dbReference type="ChEBI" id="CHEBI:16526"/>
        <dbReference type="ChEBI" id="CHEBI:17865"/>
        <dbReference type="ChEBI" id="CHEBI:35121"/>
        <dbReference type="ChEBI" id="CHEBI:57540"/>
        <dbReference type="ChEBI" id="CHEBI:57945"/>
        <dbReference type="EC" id="1.1.1.85"/>
    </reaction>
</comment>
<comment type="cofactor">
    <cofactor evidence="1">
        <name>Mg(2+)</name>
        <dbReference type="ChEBI" id="CHEBI:18420"/>
    </cofactor>
    <cofactor evidence="1">
        <name>Mn(2+)</name>
        <dbReference type="ChEBI" id="CHEBI:29035"/>
    </cofactor>
    <text evidence="1">Binds 1 Mg(2+) or Mn(2+) ion per subunit.</text>
</comment>
<comment type="pathway">
    <text evidence="1">Amino-acid biosynthesis; L-leucine biosynthesis; L-leucine from 3-methyl-2-oxobutanoate: step 3/4.</text>
</comment>
<comment type="subunit">
    <text evidence="1">Homodimer.</text>
</comment>
<comment type="subcellular location">
    <subcellularLocation>
        <location evidence="1">Cytoplasm</location>
    </subcellularLocation>
</comment>
<comment type="similarity">
    <text evidence="1">Belongs to the isocitrate and isopropylmalate dehydrogenases family. LeuB type 2 subfamily.</text>
</comment>
<reference key="1">
    <citation type="journal article" date="2005" name="Proc. Natl. Acad. Sci. U.S.A.">
        <title>The complete genome sequence of Mycobacterium avium subspecies paratuberculosis.</title>
        <authorList>
            <person name="Li L."/>
            <person name="Bannantine J.P."/>
            <person name="Zhang Q."/>
            <person name="Amonsin A."/>
            <person name="May B.J."/>
            <person name="Alt D."/>
            <person name="Banerji N."/>
            <person name="Kanjilal S."/>
            <person name="Kapur V."/>
        </authorList>
    </citation>
    <scope>NUCLEOTIDE SEQUENCE [LARGE SCALE GENOMIC DNA]</scope>
    <source>
        <strain>ATCC BAA-968 / K-10</strain>
    </source>
</reference>
<sequence length="336" mass="35660">MKLAVIGGDGIGPEVTAEALKVLDAVLPGVDKTEYDLGARRYHATGELLPDSVIDELRAHDAILLGAIGDPSVPSGVLERGLLLRLRFELDHHINLRPGRLYPGVSSPLAGNPDIDFVVVREGTEGPYTGTGGAIRVGTPNEVATEVSQNTAFGVRRVVVDAFERARRRRKHLTLVHKTNVLTFAGKLWSRIVAEVGRDYPDVEVAYQHIDAATIFMVTDPGRFDVIVTDNLFGDIITDLSAAVCGGIGLAASGNIDGTRTNPSMFEPVHGSAPDIAGQGIADPTAAIMSVALLLAHLGEDAAATRVDRAVERYLATRGNERPATTEVGERIAAAL</sequence>
<organism>
    <name type="scientific">Mycolicibacterium paratuberculosis (strain ATCC BAA-968 / K-10)</name>
    <name type="common">Mycobacterium paratuberculosis</name>
    <dbReference type="NCBI Taxonomy" id="262316"/>
    <lineage>
        <taxon>Bacteria</taxon>
        <taxon>Bacillati</taxon>
        <taxon>Actinomycetota</taxon>
        <taxon>Actinomycetes</taxon>
        <taxon>Mycobacteriales</taxon>
        <taxon>Mycobacteriaceae</taxon>
        <taxon>Mycobacterium</taxon>
        <taxon>Mycobacterium avium complex (MAC)</taxon>
    </lineage>
</organism>
<dbReference type="EC" id="1.1.1.85" evidence="1"/>
<dbReference type="EMBL" id="AE016958">
    <property type="protein sequence ID" value="AAS05580.1"/>
    <property type="molecule type" value="Genomic_DNA"/>
</dbReference>
<dbReference type="RefSeq" id="WP_003875010.1">
    <property type="nucleotide sequence ID" value="NZ_CP106873.1"/>
</dbReference>
<dbReference type="SMR" id="Q73VI1"/>
<dbReference type="STRING" id="262316.MAP_3032c"/>
<dbReference type="KEGG" id="mpa:MAP_3032c"/>
<dbReference type="eggNOG" id="COG0473">
    <property type="taxonomic scope" value="Bacteria"/>
</dbReference>
<dbReference type="HOGENOM" id="CLU_031953_0_1_11"/>
<dbReference type="UniPathway" id="UPA00048">
    <property type="reaction ID" value="UER00072"/>
</dbReference>
<dbReference type="Proteomes" id="UP000000580">
    <property type="component" value="Chromosome"/>
</dbReference>
<dbReference type="GO" id="GO:0005737">
    <property type="term" value="C:cytoplasm"/>
    <property type="evidence" value="ECO:0007669"/>
    <property type="project" value="UniProtKB-SubCell"/>
</dbReference>
<dbReference type="GO" id="GO:0003862">
    <property type="term" value="F:3-isopropylmalate dehydrogenase activity"/>
    <property type="evidence" value="ECO:0007669"/>
    <property type="project" value="UniProtKB-UniRule"/>
</dbReference>
<dbReference type="GO" id="GO:0000287">
    <property type="term" value="F:magnesium ion binding"/>
    <property type="evidence" value="ECO:0007669"/>
    <property type="project" value="InterPro"/>
</dbReference>
<dbReference type="GO" id="GO:0051287">
    <property type="term" value="F:NAD binding"/>
    <property type="evidence" value="ECO:0007669"/>
    <property type="project" value="InterPro"/>
</dbReference>
<dbReference type="GO" id="GO:0009098">
    <property type="term" value="P:L-leucine biosynthetic process"/>
    <property type="evidence" value="ECO:0007669"/>
    <property type="project" value="UniProtKB-UniRule"/>
</dbReference>
<dbReference type="Gene3D" id="3.40.718.10">
    <property type="entry name" value="Isopropylmalate Dehydrogenase"/>
    <property type="match status" value="1"/>
</dbReference>
<dbReference type="HAMAP" id="MF_01035">
    <property type="entry name" value="LeuB_type2"/>
    <property type="match status" value="1"/>
</dbReference>
<dbReference type="InterPro" id="IPR050501">
    <property type="entry name" value="ICDH/IPMDH"/>
</dbReference>
<dbReference type="InterPro" id="IPR019818">
    <property type="entry name" value="IsoCit/isopropylmalate_DH_CS"/>
</dbReference>
<dbReference type="InterPro" id="IPR024084">
    <property type="entry name" value="IsoPropMal-DH-like_dom"/>
</dbReference>
<dbReference type="InterPro" id="IPR023698">
    <property type="entry name" value="LeuB_actb"/>
</dbReference>
<dbReference type="NCBIfam" id="NF002898">
    <property type="entry name" value="PRK03437.1"/>
    <property type="match status" value="1"/>
</dbReference>
<dbReference type="PANTHER" id="PTHR43275">
    <property type="entry name" value="D-MALATE DEHYDROGENASE [DECARBOXYLATING]"/>
    <property type="match status" value="1"/>
</dbReference>
<dbReference type="PANTHER" id="PTHR43275:SF1">
    <property type="entry name" value="D-MALATE DEHYDROGENASE [DECARBOXYLATING]"/>
    <property type="match status" value="1"/>
</dbReference>
<dbReference type="Pfam" id="PF00180">
    <property type="entry name" value="Iso_dh"/>
    <property type="match status" value="1"/>
</dbReference>
<dbReference type="SMART" id="SM01329">
    <property type="entry name" value="Iso_dh"/>
    <property type="match status" value="1"/>
</dbReference>
<dbReference type="SUPFAM" id="SSF53659">
    <property type="entry name" value="Isocitrate/Isopropylmalate dehydrogenase-like"/>
    <property type="match status" value="1"/>
</dbReference>
<dbReference type="PROSITE" id="PS00470">
    <property type="entry name" value="IDH_IMDH"/>
    <property type="match status" value="1"/>
</dbReference>
<protein>
    <recommendedName>
        <fullName evidence="1">3-isopropylmalate dehydrogenase</fullName>
        <ecNumber evidence="1">1.1.1.85</ecNumber>
    </recommendedName>
    <alternativeName>
        <fullName evidence="1">3-IPM-DH</fullName>
    </alternativeName>
    <alternativeName>
        <fullName evidence="1">Beta-IPM dehydrogenase</fullName>
        <shortName evidence="1">IMDH</shortName>
    </alternativeName>
</protein>
<gene>
    <name evidence="1" type="primary">leuB</name>
    <name type="ordered locus">MAP_3032c</name>
</gene>
<name>LEU3_MYCPA</name>
<evidence type="ECO:0000255" key="1">
    <source>
        <dbReference type="HAMAP-Rule" id="MF_01035"/>
    </source>
</evidence>
<proteinExistence type="inferred from homology"/>
<keyword id="KW-0028">Amino-acid biosynthesis</keyword>
<keyword id="KW-0100">Branched-chain amino acid biosynthesis</keyword>
<keyword id="KW-0963">Cytoplasm</keyword>
<keyword id="KW-0432">Leucine biosynthesis</keyword>
<keyword id="KW-0460">Magnesium</keyword>
<keyword id="KW-0464">Manganese</keyword>
<keyword id="KW-0479">Metal-binding</keyword>
<keyword id="KW-0520">NAD</keyword>
<keyword id="KW-0560">Oxidoreductase</keyword>
<keyword id="KW-1185">Reference proteome</keyword>
<feature type="chain" id="PRO_0000083802" description="3-isopropylmalate dehydrogenase">
    <location>
        <begin position="1"/>
        <end position="336"/>
    </location>
</feature>
<feature type="binding site" evidence="1">
    <location>
        <position position="87"/>
    </location>
    <ligand>
        <name>substrate</name>
    </ligand>
</feature>
<feature type="binding site" evidence="1">
    <location>
        <position position="97"/>
    </location>
    <ligand>
        <name>substrate</name>
    </ligand>
</feature>
<feature type="binding site" evidence="1">
    <location>
        <position position="121"/>
    </location>
    <ligand>
        <name>substrate</name>
    </ligand>
</feature>
<feature type="binding site" evidence="1">
    <location>
        <position position="211"/>
    </location>
    <ligand>
        <name>Mg(2+)</name>
        <dbReference type="ChEBI" id="CHEBI:18420"/>
    </ligand>
</feature>
<feature type="binding site" evidence="1">
    <location>
        <position position="211"/>
    </location>
    <ligand>
        <name>substrate</name>
    </ligand>
</feature>
<feature type="binding site" evidence="1">
    <location>
        <position position="235"/>
    </location>
    <ligand>
        <name>Mg(2+)</name>
        <dbReference type="ChEBI" id="CHEBI:18420"/>
    </ligand>
</feature>
<feature type="binding site" evidence="1">
    <location>
        <position position="239"/>
    </location>
    <ligand>
        <name>Mg(2+)</name>
        <dbReference type="ChEBI" id="CHEBI:18420"/>
    </ligand>
</feature>
<feature type="binding site" evidence="1">
    <location>
        <begin position="271"/>
        <end position="283"/>
    </location>
    <ligand>
        <name>NAD(+)</name>
        <dbReference type="ChEBI" id="CHEBI:57540"/>
    </ligand>
</feature>
<feature type="site" description="Important for catalysis" evidence="1">
    <location>
        <position position="128"/>
    </location>
</feature>
<feature type="site" description="Important for catalysis" evidence="1">
    <location>
        <position position="178"/>
    </location>
</feature>
<accession>Q73VI1</accession>